<name>RS14_CHLFF</name>
<sequence length="101" mass="11645">MAKKSAVARENKRRKLVEANYKKRSELRKIAKSLTASEEEKENARVALNKMKRDTAPIRLHNRCLLTGRPRGYLRKFAISRICFRQMASMGEIPGVVKASW</sequence>
<keyword id="KW-0687">Ribonucleoprotein</keyword>
<keyword id="KW-0689">Ribosomal protein</keyword>
<keyword id="KW-0694">RNA-binding</keyword>
<keyword id="KW-0699">rRNA-binding</keyword>
<feature type="chain" id="PRO_1000128352" description="Small ribosomal subunit protein uS14">
    <location>
        <begin position="1"/>
        <end position="101"/>
    </location>
</feature>
<accession>Q255T5</accession>
<dbReference type="EMBL" id="AP006861">
    <property type="protein sequence ID" value="BAE80953.1"/>
    <property type="molecule type" value="Genomic_DNA"/>
</dbReference>
<dbReference type="RefSeq" id="WP_006344408.1">
    <property type="nucleotide sequence ID" value="NC_007899.1"/>
</dbReference>
<dbReference type="SMR" id="Q255T5"/>
<dbReference type="STRING" id="264202.CF0181"/>
<dbReference type="KEGG" id="cfe:CF0181"/>
<dbReference type="eggNOG" id="COG0199">
    <property type="taxonomic scope" value="Bacteria"/>
</dbReference>
<dbReference type="HOGENOM" id="CLU_139869_0_1_0"/>
<dbReference type="OrthoDB" id="9810484at2"/>
<dbReference type="Proteomes" id="UP000001260">
    <property type="component" value="Chromosome"/>
</dbReference>
<dbReference type="GO" id="GO:0005737">
    <property type="term" value="C:cytoplasm"/>
    <property type="evidence" value="ECO:0007669"/>
    <property type="project" value="UniProtKB-ARBA"/>
</dbReference>
<dbReference type="GO" id="GO:0015935">
    <property type="term" value="C:small ribosomal subunit"/>
    <property type="evidence" value="ECO:0007669"/>
    <property type="project" value="TreeGrafter"/>
</dbReference>
<dbReference type="GO" id="GO:0019843">
    <property type="term" value="F:rRNA binding"/>
    <property type="evidence" value="ECO:0007669"/>
    <property type="project" value="UniProtKB-UniRule"/>
</dbReference>
<dbReference type="GO" id="GO:0003735">
    <property type="term" value="F:structural constituent of ribosome"/>
    <property type="evidence" value="ECO:0007669"/>
    <property type="project" value="InterPro"/>
</dbReference>
<dbReference type="GO" id="GO:0006412">
    <property type="term" value="P:translation"/>
    <property type="evidence" value="ECO:0007669"/>
    <property type="project" value="UniProtKB-UniRule"/>
</dbReference>
<dbReference type="FunFam" id="1.10.287.1480:FF:000001">
    <property type="entry name" value="30S ribosomal protein S14"/>
    <property type="match status" value="1"/>
</dbReference>
<dbReference type="Gene3D" id="1.10.287.1480">
    <property type="match status" value="1"/>
</dbReference>
<dbReference type="HAMAP" id="MF_00537">
    <property type="entry name" value="Ribosomal_uS14_1"/>
    <property type="match status" value="1"/>
</dbReference>
<dbReference type="InterPro" id="IPR001209">
    <property type="entry name" value="Ribosomal_uS14"/>
</dbReference>
<dbReference type="InterPro" id="IPR023036">
    <property type="entry name" value="Ribosomal_uS14_bac/plastid"/>
</dbReference>
<dbReference type="InterPro" id="IPR018271">
    <property type="entry name" value="Ribosomal_uS14_CS"/>
</dbReference>
<dbReference type="NCBIfam" id="NF006477">
    <property type="entry name" value="PRK08881.1"/>
    <property type="match status" value="1"/>
</dbReference>
<dbReference type="PANTHER" id="PTHR19836">
    <property type="entry name" value="30S RIBOSOMAL PROTEIN S14"/>
    <property type="match status" value="1"/>
</dbReference>
<dbReference type="PANTHER" id="PTHR19836:SF19">
    <property type="entry name" value="SMALL RIBOSOMAL SUBUNIT PROTEIN US14M"/>
    <property type="match status" value="1"/>
</dbReference>
<dbReference type="Pfam" id="PF00253">
    <property type="entry name" value="Ribosomal_S14"/>
    <property type="match status" value="1"/>
</dbReference>
<dbReference type="SUPFAM" id="SSF57716">
    <property type="entry name" value="Glucocorticoid receptor-like (DNA-binding domain)"/>
    <property type="match status" value="1"/>
</dbReference>
<dbReference type="PROSITE" id="PS00527">
    <property type="entry name" value="RIBOSOMAL_S14"/>
    <property type="match status" value="1"/>
</dbReference>
<organism>
    <name type="scientific">Chlamydia felis (strain Fe/C-56)</name>
    <name type="common">Chlamydophila felis</name>
    <dbReference type="NCBI Taxonomy" id="264202"/>
    <lineage>
        <taxon>Bacteria</taxon>
        <taxon>Pseudomonadati</taxon>
        <taxon>Chlamydiota</taxon>
        <taxon>Chlamydiia</taxon>
        <taxon>Chlamydiales</taxon>
        <taxon>Chlamydiaceae</taxon>
        <taxon>Chlamydia/Chlamydophila group</taxon>
        <taxon>Chlamydia</taxon>
    </lineage>
</organism>
<comment type="function">
    <text evidence="1">Binds 16S rRNA, required for the assembly of 30S particles and may also be responsible for determining the conformation of the 16S rRNA at the A site.</text>
</comment>
<comment type="subunit">
    <text evidence="1">Part of the 30S ribosomal subunit. Contacts proteins S3 and S10.</text>
</comment>
<comment type="similarity">
    <text evidence="1">Belongs to the universal ribosomal protein uS14 family.</text>
</comment>
<protein>
    <recommendedName>
        <fullName evidence="1">Small ribosomal subunit protein uS14</fullName>
    </recommendedName>
    <alternativeName>
        <fullName evidence="2">30S ribosomal protein S14</fullName>
    </alternativeName>
</protein>
<gene>
    <name evidence="1" type="primary">rpsN</name>
    <name type="ordered locus">CF0181</name>
</gene>
<evidence type="ECO:0000255" key="1">
    <source>
        <dbReference type="HAMAP-Rule" id="MF_00537"/>
    </source>
</evidence>
<evidence type="ECO:0000305" key="2"/>
<reference key="1">
    <citation type="journal article" date="2006" name="DNA Res.">
        <title>Genome sequence of the cat pathogen, Chlamydophila felis.</title>
        <authorList>
            <person name="Azuma Y."/>
            <person name="Hirakawa H."/>
            <person name="Yamashita A."/>
            <person name="Cai Y."/>
            <person name="Rahman M.A."/>
            <person name="Suzuki H."/>
            <person name="Mitaku S."/>
            <person name="Toh H."/>
            <person name="Goto S."/>
            <person name="Murakami T."/>
            <person name="Sugi K."/>
            <person name="Hayashi H."/>
            <person name="Fukushi H."/>
            <person name="Hattori M."/>
            <person name="Kuhara S."/>
            <person name="Shirai M."/>
        </authorList>
    </citation>
    <scope>NUCLEOTIDE SEQUENCE [LARGE SCALE GENOMIC DNA]</scope>
    <source>
        <strain>Fe/C-56</strain>
    </source>
</reference>
<proteinExistence type="inferred from homology"/>